<feature type="chain" id="PRO_0000408516" description="Taicatoxin, alpha-neurotoxin-like component">
    <location>
        <begin position="1"/>
        <end position="28" status="greater than"/>
    </location>
</feature>
<feature type="disulfide bond" evidence="1">
    <location>
        <begin position="3"/>
        <end position="21"/>
    </location>
</feature>
<feature type="non-terminal residue">
    <location>
        <position position="28"/>
    </location>
</feature>
<reference key="1">
    <citation type="journal article" date="1992" name="Toxicon">
        <title>Isolation and physiological characterization of taicatoxin, a complex toxin with specific effects on calcium channels.</title>
        <authorList>
            <person name="Possani L.D."/>
            <person name="Martin B.M."/>
            <person name="Yatani A."/>
            <person name="Mochca-Morales J."/>
            <person name="Zamudio F.Z."/>
            <person name="Gurrola G.B."/>
            <person name="Brown A.M."/>
        </authorList>
    </citation>
    <scope>PROTEIN SEQUENCE</scope>
    <scope>SUBUNIT</scope>
    <scope>SUBCELLULAR LOCATION</scope>
    <scope>TOXIC DOSE</scope>
    <source>
        <tissue>Venom</tissue>
    </source>
</reference>
<reference key="2">
    <citation type="journal article" date="1996" name="Mol. Cell. Biochem.">
        <title>Effect of TaiCatoxin (TCX) on the electrophysiological, mechanical and biochemical characteristics of spontaneously beating ventricular cardiomyocytes.</title>
        <authorList>
            <person name="Fantini E."/>
            <person name="Athias P."/>
            <person name="Tirosh R."/>
            <person name="Pinson A."/>
        </authorList>
    </citation>
    <scope>FUNCTION</scope>
</reference>
<reference key="3">
    <citation type="journal article" date="1997" name="J. Biol. Chem.">
        <title>A novel small conductance Ca2+-activated K+ channel blocker from Oxyuranus scutellatus taipan venom. Re-evaluation of taicatoxin as a selective Ca2+ channel probe.</title>
        <authorList>
            <person name="Doorty K.B."/>
            <person name="Bevan S."/>
            <person name="Wadsworth J.D.F."/>
            <person name="Strong P.N."/>
        </authorList>
    </citation>
    <scope>FUNCTION</scope>
</reference>
<reference key="4">
    <citation type="journal article" date="2005" name="Hear. Res.">
        <title>Taicatoxin inhibits the calcium-dependent slow motility of mammalian outer hair cells.</title>
        <authorList>
            <person name="Su M.-C."/>
            <person name="Lee S.-Y."/>
            <person name="Tan C.-T."/>
            <person name="Su C.-C."/>
            <person name="Li S.-Y."/>
            <person name="Lin R.-H."/>
            <person name="Hung C.-C."/>
            <person name="Lin M.-J."/>
        </authorList>
    </citation>
    <scope>FUNCTION</scope>
</reference>
<accession>P0CJ35</accession>
<proteinExistence type="evidence at protein level"/>
<name>3L2L_OXYSC</name>
<keyword id="KW-0108">Calcium channel impairing toxin</keyword>
<keyword id="KW-1221">Calcium-activated potassium channel impairing toxin</keyword>
<keyword id="KW-0903">Direct protein sequencing</keyword>
<keyword id="KW-1015">Disulfide bond</keyword>
<keyword id="KW-0872">Ion channel impairing toxin</keyword>
<keyword id="KW-0528">Neurotoxin</keyword>
<keyword id="KW-0632">Potassium channel impairing toxin</keyword>
<keyword id="KW-0964">Secreted</keyword>
<keyword id="KW-0800">Toxin</keyword>
<keyword id="KW-1218">Voltage-gated calcium channel impairing toxin</keyword>
<comment type="function">
    <text evidence="3 4 5">The heterotrimer blocks the voltage-dependent L-type calcium channels (Cav1/CACNA1) from the heart, and the small conductance calcium-activated potassium channels (KCa2/KCNN) in the chromaffin cells and in the brain. Is very toxic to mice.</text>
</comment>
<comment type="subunit">
    <text evidence="2">Heterotrimer composed of this alpha-neurotoxin-like peptide of 8 kDa, a neurotoxic phospholipase of 16 kDa (AC Q7LZG2) and a serine protease inhibitor of 7 kDa (AC B7S4N9) at an approximate stoichiometry of 1:1:4; non-covalently linked.</text>
</comment>
<comment type="subcellular location">
    <subcellularLocation>
        <location evidence="2">Secreted</location>
    </subcellularLocation>
</comment>
<comment type="tissue specificity">
    <text evidence="2">Expressed by the venom gland.</text>
</comment>
<comment type="toxic dose">
    <text evidence="2">LD(50) of the heterotrimer is 50-100 ug/kg to mice.</text>
</comment>
<comment type="miscellaneous">
    <text>Is composed of 65-68 amino acid residues.</text>
</comment>
<comment type="similarity">
    <text evidence="6">Belongs to the three-finger toxin family. Long-chain subfamily. Type II alpha-neurotoxin sub-subfamily.</text>
</comment>
<comment type="online information" name="Wikipedia">
    <link uri="https://en.wikipedia.org/wiki/Taicatoxin"/>
    <text>Taicatoxin entry</text>
</comment>
<protein>
    <recommendedName>
        <fullName>Taicatoxin, alpha-neurotoxin-like component</fullName>
        <shortName>TCX, alpha-neurotoxin-like component</shortName>
    </recommendedName>
</protein>
<dbReference type="GO" id="GO:0005576">
    <property type="term" value="C:extracellular region"/>
    <property type="evidence" value="ECO:0007669"/>
    <property type="project" value="UniProtKB-SubCell"/>
</dbReference>
<dbReference type="GO" id="GO:0005246">
    <property type="term" value="F:calcium channel regulator activity"/>
    <property type="evidence" value="ECO:0007669"/>
    <property type="project" value="UniProtKB-KW"/>
</dbReference>
<dbReference type="GO" id="GO:0015459">
    <property type="term" value="F:potassium channel regulator activity"/>
    <property type="evidence" value="ECO:0007669"/>
    <property type="project" value="UniProtKB-KW"/>
</dbReference>
<dbReference type="GO" id="GO:0090729">
    <property type="term" value="F:toxin activity"/>
    <property type="evidence" value="ECO:0007669"/>
    <property type="project" value="UniProtKB-KW"/>
</dbReference>
<dbReference type="Gene3D" id="2.10.60.10">
    <property type="entry name" value="CD59"/>
    <property type="match status" value="1"/>
</dbReference>
<dbReference type="InterPro" id="IPR045860">
    <property type="entry name" value="Snake_toxin-like_sf"/>
</dbReference>
<evidence type="ECO:0000250" key="1"/>
<evidence type="ECO:0000269" key="2">
    <source>
    </source>
</evidence>
<evidence type="ECO:0000269" key="3">
    <source>
    </source>
</evidence>
<evidence type="ECO:0000269" key="4">
    <source>
    </source>
</evidence>
<evidence type="ECO:0000269" key="5">
    <source>
    </source>
</evidence>
<evidence type="ECO:0000305" key="6"/>
<sequence length="28" mass="3209">RRCFITPNVRSERCPPGQEVCFTKTXDG</sequence>
<organism>
    <name type="scientific">Oxyuranus scutellatus scutellatus</name>
    <name type="common">Australian taipan</name>
    <name type="synonym">Coastal taipan</name>
    <dbReference type="NCBI Taxonomy" id="8667"/>
    <lineage>
        <taxon>Eukaryota</taxon>
        <taxon>Metazoa</taxon>
        <taxon>Chordata</taxon>
        <taxon>Craniata</taxon>
        <taxon>Vertebrata</taxon>
        <taxon>Euteleostomi</taxon>
        <taxon>Lepidosauria</taxon>
        <taxon>Squamata</taxon>
        <taxon>Bifurcata</taxon>
        <taxon>Unidentata</taxon>
        <taxon>Episquamata</taxon>
        <taxon>Toxicofera</taxon>
        <taxon>Serpentes</taxon>
        <taxon>Colubroidea</taxon>
        <taxon>Elapidae</taxon>
        <taxon>Hydrophiinae</taxon>
        <taxon>Oxyuranus</taxon>
    </lineage>
</organism>